<sequence length="247" mass="27573">MFMTRSEYDRGVNTFSPEGRLFQVEYAIEAIKLGSTAIGVKTKDAVVLGVEKRLTSPLMESHSVEKLFEIDSHIGCAISGLTADARTIIEHARVQTQNHRFTYDEPQGIESTTQSICDLALRFGEGEDGEERIMSRPFGVALLIAGIDEHGPQLYHSEPSGTYFRYEAKAIGSGSEPAKSELVKEFHKDMTLEEAEVLILKVLRQVMEEKLDSKNVQLAKVTAEGGFHIYNDEEMADAVAREQQRMD</sequence>
<organism>
    <name type="scientific">Schizosaccharomyces pombe (strain 972 / ATCC 24843)</name>
    <name type="common">Fission yeast</name>
    <dbReference type="NCBI Taxonomy" id="284812"/>
    <lineage>
        <taxon>Eukaryota</taxon>
        <taxon>Fungi</taxon>
        <taxon>Dikarya</taxon>
        <taxon>Ascomycota</taxon>
        <taxon>Taphrinomycotina</taxon>
        <taxon>Schizosaccharomycetes</taxon>
        <taxon>Schizosaccharomycetales</taxon>
        <taxon>Schizosaccharomycetaceae</taxon>
        <taxon>Schizosaccharomyces</taxon>
    </lineage>
</organism>
<protein>
    <recommendedName>
        <fullName>Probable proteasome subunit alpha type-5</fullName>
    </recommendedName>
</protein>
<gene>
    <name type="primary">pup2</name>
    <name type="ORF">SPAC323.02c</name>
</gene>
<accession>Q9UT97</accession>
<comment type="function">
    <text evidence="1">The proteasome is a multicatalytic proteinase complex which is characterized by its ability to cleave peptides with Arg, Phe, Tyr, Leu, and Glu adjacent to the leaving group at neutral or slightly basic pH. The proteasome has an ATP-dependent proteolytic activity (By similarity).</text>
</comment>
<comment type="subunit">
    <text evidence="1">The 26S proteasome consists of a 20S proteasome core and two 19S regulatory subunits. The 20S proteasome core is composed of 28 subunits that are arranged in four stacked rings, resulting in a barrel-shaped structure. The two end rings are each formed by seven alpha subunits, and the two central rings are each formed by seven beta subunits. The catalytic chamber with the active sites is on the inside of the barrel (By similarity).</text>
</comment>
<comment type="subcellular location">
    <subcellularLocation>
        <location evidence="3">Cytoplasm</location>
    </subcellularLocation>
    <subcellularLocation>
        <location evidence="3">Nucleus</location>
    </subcellularLocation>
</comment>
<comment type="similarity">
    <text evidence="2">Belongs to the peptidase T1A family.</text>
</comment>
<dbReference type="EMBL" id="CU329670">
    <property type="protein sequence ID" value="CAB53405.1"/>
    <property type="molecule type" value="Genomic_DNA"/>
</dbReference>
<dbReference type="PIR" id="T38639">
    <property type="entry name" value="T38639"/>
</dbReference>
<dbReference type="RefSeq" id="NP_594372.1">
    <property type="nucleotide sequence ID" value="NM_001019793.2"/>
</dbReference>
<dbReference type="SMR" id="Q9UT97"/>
<dbReference type="BioGRID" id="279634">
    <property type="interactions" value="14"/>
</dbReference>
<dbReference type="ComplexPortal" id="CPX-9077">
    <property type="entry name" value="26S proteasome complex"/>
</dbReference>
<dbReference type="FunCoup" id="Q9UT97">
    <property type="interactions" value="642"/>
</dbReference>
<dbReference type="IntAct" id="Q9UT97">
    <property type="interactions" value="3"/>
</dbReference>
<dbReference type="MINT" id="Q9UT97"/>
<dbReference type="STRING" id="284812.Q9UT97"/>
<dbReference type="MEROPS" id="T01.975"/>
<dbReference type="iPTMnet" id="Q9UT97"/>
<dbReference type="PaxDb" id="4896-SPAC323.02c.1"/>
<dbReference type="EnsemblFungi" id="SPAC323.02c.1">
    <property type="protein sequence ID" value="SPAC323.02c.1:pep"/>
    <property type="gene ID" value="SPAC323.02c"/>
</dbReference>
<dbReference type="GeneID" id="2543205"/>
<dbReference type="KEGG" id="spo:2543205"/>
<dbReference type="PomBase" id="SPAC323.02c">
    <property type="gene designation" value="pup2"/>
</dbReference>
<dbReference type="VEuPathDB" id="FungiDB:SPAC323.02c"/>
<dbReference type="eggNOG" id="KOG0176">
    <property type="taxonomic scope" value="Eukaryota"/>
</dbReference>
<dbReference type="HOGENOM" id="CLU_035750_4_2_1"/>
<dbReference type="InParanoid" id="Q9UT97"/>
<dbReference type="OMA" id="RSMIDHA"/>
<dbReference type="PhylomeDB" id="Q9UT97"/>
<dbReference type="Reactome" id="R-SPO-1236978">
    <property type="pathway name" value="Cross-presentation of soluble exogenous antigens (endosomes)"/>
</dbReference>
<dbReference type="Reactome" id="R-SPO-350562">
    <property type="pathway name" value="Regulation of ornithine decarboxylase (ODC)"/>
</dbReference>
<dbReference type="Reactome" id="R-SPO-5687128">
    <property type="pathway name" value="MAPK6/MAPK4 signaling"/>
</dbReference>
<dbReference type="Reactome" id="R-SPO-5689603">
    <property type="pathway name" value="UCH proteinases"/>
</dbReference>
<dbReference type="Reactome" id="R-SPO-5689880">
    <property type="pathway name" value="Ub-specific processing proteases"/>
</dbReference>
<dbReference type="Reactome" id="R-SPO-6798695">
    <property type="pathway name" value="Neutrophil degranulation"/>
</dbReference>
<dbReference type="Reactome" id="R-SPO-68949">
    <property type="pathway name" value="Orc1 removal from chromatin"/>
</dbReference>
<dbReference type="Reactome" id="R-SPO-69017">
    <property type="pathway name" value="CDK-mediated phosphorylation and removal of Cdc6"/>
</dbReference>
<dbReference type="Reactome" id="R-SPO-69601">
    <property type="pathway name" value="Ubiquitin Mediated Degradation of Phosphorylated Cdc25A"/>
</dbReference>
<dbReference type="Reactome" id="R-SPO-75815">
    <property type="pathway name" value="Ubiquitin-dependent degradation of Cyclin D"/>
</dbReference>
<dbReference type="Reactome" id="R-SPO-8854050">
    <property type="pathway name" value="FBXL7 down-regulates AURKA during mitotic entry and in early mitosis"/>
</dbReference>
<dbReference type="Reactome" id="R-SPO-8948751">
    <property type="pathway name" value="Regulation of PTEN stability and activity"/>
</dbReference>
<dbReference type="Reactome" id="R-SPO-8951664">
    <property type="pathway name" value="Neddylation"/>
</dbReference>
<dbReference type="Reactome" id="R-SPO-9755511">
    <property type="pathway name" value="KEAP1-NFE2L2 pathway"/>
</dbReference>
<dbReference type="Reactome" id="R-SPO-983168">
    <property type="pathway name" value="Antigen processing: Ubiquitination &amp; Proteasome degradation"/>
</dbReference>
<dbReference type="Reactome" id="R-SPO-9907900">
    <property type="pathway name" value="Proteasome assembly"/>
</dbReference>
<dbReference type="PRO" id="PR:Q9UT97"/>
<dbReference type="Proteomes" id="UP000002485">
    <property type="component" value="Chromosome I"/>
</dbReference>
<dbReference type="GO" id="GO:0005829">
    <property type="term" value="C:cytosol"/>
    <property type="evidence" value="ECO:0007005"/>
    <property type="project" value="PomBase"/>
</dbReference>
<dbReference type="GO" id="GO:0005634">
    <property type="term" value="C:nucleus"/>
    <property type="evidence" value="ECO:0007005"/>
    <property type="project" value="PomBase"/>
</dbReference>
<dbReference type="GO" id="GO:0019773">
    <property type="term" value="C:proteasome core complex, alpha-subunit complex"/>
    <property type="evidence" value="ECO:0000314"/>
    <property type="project" value="PomBase"/>
</dbReference>
<dbReference type="GO" id="GO:0043161">
    <property type="term" value="P:proteasome-mediated ubiquitin-dependent protein catabolic process"/>
    <property type="evidence" value="ECO:0000318"/>
    <property type="project" value="GO_Central"/>
</dbReference>
<dbReference type="CDD" id="cd03753">
    <property type="entry name" value="proteasome_alpha_type_5"/>
    <property type="match status" value="1"/>
</dbReference>
<dbReference type="FunFam" id="3.60.20.10:FF:000015">
    <property type="entry name" value="Proteasome subunit alpha type-5"/>
    <property type="match status" value="1"/>
</dbReference>
<dbReference type="Gene3D" id="3.60.20.10">
    <property type="entry name" value="Glutamine Phosphoribosylpyrophosphate, subunit 1, domain 1"/>
    <property type="match status" value="1"/>
</dbReference>
<dbReference type="InterPro" id="IPR029055">
    <property type="entry name" value="Ntn_hydrolases_N"/>
</dbReference>
<dbReference type="InterPro" id="IPR050115">
    <property type="entry name" value="Proteasome_alpha"/>
</dbReference>
<dbReference type="InterPro" id="IPR023332">
    <property type="entry name" value="Proteasome_alpha-type"/>
</dbReference>
<dbReference type="InterPro" id="IPR033812">
    <property type="entry name" value="Proteasome_alpha_type_5"/>
</dbReference>
<dbReference type="InterPro" id="IPR000426">
    <property type="entry name" value="Proteasome_asu_N"/>
</dbReference>
<dbReference type="InterPro" id="IPR001353">
    <property type="entry name" value="Proteasome_sua/b"/>
</dbReference>
<dbReference type="NCBIfam" id="NF003075">
    <property type="entry name" value="PRK03996.1"/>
    <property type="match status" value="1"/>
</dbReference>
<dbReference type="PANTHER" id="PTHR11599">
    <property type="entry name" value="PROTEASOME SUBUNIT ALPHA/BETA"/>
    <property type="match status" value="1"/>
</dbReference>
<dbReference type="Pfam" id="PF00227">
    <property type="entry name" value="Proteasome"/>
    <property type="match status" value="1"/>
</dbReference>
<dbReference type="Pfam" id="PF10584">
    <property type="entry name" value="Proteasome_A_N"/>
    <property type="match status" value="1"/>
</dbReference>
<dbReference type="SMART" id="SM00948">
    <property type="entry name" value="Proteasome_A_N"/>
    <property type="match status" value="1"/>
</dbReference>
<dbReference type="SUPFAM" id="SSF56235">
    <property type="entry name" value="N-terminal nucleophile aminohydrolases (Ntn hydrolases)"/>
    <property type="match status" value="1"/>
</dbReference>
<dbReference type="PROSITE" id="PS00388">
    <property type="entry name" value="PROTEASOME_ALPHA_1"/>
    <property type="match status" value="1"/>
</dbReference>
<dbReference type="PROSITE" id="PS51475">
    <property type="entry name" value="PROTEASOME_ALPHA_2"/>
    <property type="match status" value="1"/>
</dbReference>
<reference key="1">
    <citation type="journal article" date="2002" name="Nature">
        <title>The genome sequence of Schizosaccharomyces pombe.</title>
        <authorList>
            <person name="Wood V."/>
            <person name="Gwilliam R."/>
            <person name="Rajandream M.A."/>
            <person name="Lyne M.H."/>
            <person name="Lyne R."/>
            <person name="Stewart A."/>
            <person name="Sgouros J.G."/>
            <person name="Peat N."/>
            <person name="Hayles J."/>
            <person name="Baker S.G."/>
            <person name="Basham D."/>
            <person name="Bowman S."/>
            <person name="Brooks K."/>
            <person name="Brown D."/>
            <person name="Brown S."/>
            <person name="Chillingworth T."/>
            <person name="Churcher C.M."/>
            <person name="Collins M."/>
            <person name="Connor R."/>
            <person name="Cronin A."/>
            <person name="Davis P."/>
            <person name="Feltwell T."/>
            <person name="Fraser A."/>
            <person name="Gentles S."/>
            <person name="Goble A."/>
            <person name="Hamlin N."/>
            <person name="Harris D.E."/>
            <person name="Hidalgo J."/>
            <person name="Hodgson G."/>
            <person name="Holroyd S."/>
            <person name="Hornsby T."/>
            <person name="Howarth S."/>
            <person name="Huckle E.J."/>
            <person name="Hunt S."/>
            <person name="Jagels K."/>
            <person name="James K.D."/>
            <person name="Jones L."/>
            <person name="Jones M."/>
            <person name="Leather S."/>
            <person name="McDonald S."/>
            <person name="McLean J."/>
            <person name="Mooney P."/>
            <person name="Moule S."/>
            <person name="Mungall K.L."/>
            <person name="Murphy L.D."/>
            <person name="Niblett D."/>
            <person name="Odell C."/>
            <person name="Oliver K."/>
            <person name="O'Neil S."/>
            <person name="Pearson D."/>
            <person name="Quail M.A."/>
            <person name="Rabbinowitsch E."/>
            <person name="Rutherford K.M."/>
            <person name="Rutter S."/>
            <person name="Saunders D."/>
            <person name="Seeger K."/>
            <person name="Sharp S."/>
            <person name="Skelton J."/>
            <person name="Simmonds M.N."/>
            <person name="Squares R."/>
            <person name="Squares S."/>
            <person name="Stevens K."/>
            <person name="Taylor K."/>
            <person name="Taylor R.G."/>
            <person name="Tivey A."/>
            <person name="Walsh S.V."/>
            <person name="Warren T."/>
            <person name="Whitehead S."/>
            <person name="Woodward J.R."/>
            <person name="Volckaert G."/>
            <person name="Aert R."/>
            <person name="Robben J."/>
            <person name="Grymonprez B."/>
            <person name="Weltjens I."/>
            <person name="Vanstreels E."/>
            <person name="Rieger M."/>
            <person name="Schaefer M."/>
            <person name="Mueller-Auer S."/>
            <person name="Gabel C."/>
            <person name="Fuchs M."/>
            <person name="Duesterhoeft A."/>
            <person name="Fritzc C."/>
            <person name="Holzer E."/>
            <person name="Moestl D."/>
            <person name="Hilbert H."/>
            <person name="Borzym K."/>
            <person name="Langer I."/>
            <person name="Beck A."/>
            <person name="Lehrach H."/>
            <person name="Reinhardt R."/>
            <person name="Pohl T.M."/>
            <person name="Eger P."/>
            <person name="Zimmermann W."/>
            <person name="Wedler H."/>
            <person name="Wambutt R."/>
            <person name="Purnelle B."/>
            <person name="Goffeau A."/>
            <person name="Cadieu E."/>
            <person name="Dreano S."/>
            <person name="Gloux S."/>
            <person name="Lelaure V."/>
            <person name="Mottier S."/>
            <person name="Galibert F."/>
            <person name="Aves S.J."/>
            <person name="Xiang Z."/>
            <person name="Hunt C."/>
            <person name="Moore K."/>
            <person name="Hurst S.M."/>
            <person name="Lucas M."/>
            <person name="Rochet M."/>
            <person name="Gaillardin C."/>
            <person name="Tallada V.A."/>
            <person name="Garzon A."/>
            <person name="Thode G."/>
            <person name="Daga R.R."/>
            <person name="Cruzado L."/>
            <person name="Jimenez J."/>
            <person name="Sanchez M."/>
            <person name="del Rey F."/>
            <person name="Benito J."/>
            <person name="Dominguez A."/>
            <person name="Revuelta J.L."/>
            <person name="Moreno S."/>
            <person name="Armstrong J."/>
            <person name="Forsburg S.L."/>
            <person name="Cerutti L."/>
            <person name="Lowe T."/>
            <person name="McCombie W.R."/>
            <person name="Paulsen I."/>
            <person name="Potashkin J."/>
            <person name="Shpakovski G.V."/>
            <person name="Ussery D."/>
            <person name="Barrell B.G."/>
            <person name="Nurse P."/>
        </authorList>
    </citation>
    <scope>NUCLEOTIDE SEQUENCE [LARGE SCALE GENOMIC DNA]</scope>
    <source>
        <strain>972 / ATCC 24843</strain>
    </source>
</reference>
<reference key="2">
    <citation type="journal article" date="2006" name="Nat. Biotechnol.">
        <title>ORFeome cloning and global analysis of protein localization in the fission yeast Schizosaccharomyces pombe.</title>
        <authorList>
            <person name="Matsuyama A."/>
            <person name="Arai R."/>
            <person name="Yashiroda Y."/>
            <person name="Shirai A."/>
            <person name="Kamata A."/>
            <person name="Sekido S."/>
            <person name="Kobayashi Y."/>
            <person name="Hashimoto A."/>
            <person name="Hamamoto M."/>
            <person name="Hiraoka Y."/>
            <person name="Horinouchi S."/>
            <person name="Yoshida M."/>
        </authorList>
    </citation>
    <scope>SUBCELLULAR LOCATION [LARGE SCALE ANALYSIS]</scope>
</reference>
<reference key="3">
    <citation type="journal article" date="2008" name="J. Proteome Res.">
        <title>Phosphoproteome analysis of fission yeast.</title>
        <authorList>
            <person name="Wilson-Grady J.T."/>
            <person name="Villen J."/>
            <person name="Gygi S.P."/>
        </authorList>
    </citation>
    <scope>PHOSPHORYLATION [LARGE SCALE ANALYSIS] AT THR-55</scope>
    <scope>IDENTIFICATION BY MASS SPECTROMETRY</scope>
</reference>
<name>PSA5_SCHPO</name>
<feature type="chain" id="PRO_0000124128" description="Probable proteasome subunit alpha type-5">
    <location>
        <begin position="1"/>
        <end position="247"/>
    </location>
</feature>
<feature type="modified residue" description="Phosphothreonine" evidence="4">
    <location>
        <position position="55"/>
    </location>
</feature>
<evidence type="ECO:0000250" key="1"/>
<evidence type="ECO:0000255" key="2">
    <source>
        <dbReference type="PROSITE-ProRule" id="PRU00808"/>
    </source>
</evidence>
<evidence type="ECO:0000269" key="3">
    <source>
    </source>
</evidence>
<evidence type="ECO:0000269" key="4">
    <source>
    </source>
</evidence>
<proteinExistence type="evidence at protein level"/>
<keyword id="KW-0963">Cytoplasm</keyword>
<keyword id="KW-0539">Nucleus</keyword>
<keyword id="KW-0597">Phosphoprotein</keyword>
<keyword id="KW-0647">Proteasome</keyword>
<keyword id="KW-1185">Reference proteome</keyword>